<dbReference type="EMBL" id="AL646052">
    <property type="protein sequence ID" value="CAD15126.1"/>
    <property type="molecule type" value="Genomic_DNA"/>
</dbReference>
<dbReference type="RefSeq" id="WP_011001373.1">
    <property type="nucleotide sequence ID" value="NC_003295.1"/>
</dbReference>
<dbReference type="SMR" id="Q8XZH1"/>
<dbReference type="STRING" id="267608.RSc1424"/>
<dbReference type="EnsemblBacteria" id="CAD15126">
    <property type="protein sequence ID" value="CAD15126"/>
    <property type="gene ID" value="RSc1424"/>
</dbReference>
<dbReference type="GeneID" id="93852555"/>
<dbReference type="KEGG" id="rso:RSc1424"/>
<dbReference type="eggNOG" id="COG0691">
    <property type="taxonomic scope" value="Bacteria"/>
</dbReference>
<dbReference type="HOGENOM" id="CLU_108953_3_0_4"/>
<dbReference type="Proteomes" id="UP000001436">
    <property type="component" value="Chromosome"/>
</dbReference>
<dbReference type="GO" id="GO:0005829">
    <property type="term" value="C:cytosol"/>
    <property type="evidence" value="ECO:0007669"/>
    <property type="project" value="TreeGrafter"/>
</dbReference>
<dbReference type="GO" id="GO:0003723">
    <property type="term" value="F:RNA binding"/>
    <property type="evidence" value="ECO:0007669"/>
    <property type="project" value="UniProtKB-UniRule"/>
</dbReference>
<dbReference type="GO" id="GO:0070929">
    <property type="term" value="P:trans-translation"/>
    <property type="evidence" value="ECO:0007669"/>
    <property type="project" value="UniProtKB-UniRule"/>
</dbReference>
<dbReference type="CDD" id="cd09294">
    <property type="entry name" value="SmpB"/>
    <property type="match status" value="1"/>
</dbReference>
<dbReference type="Gene3D" id="2.40.280.10">
    <property type="match status" value="1"/>
</dbReference>
<dbReference type="HAMAP" id="MF_00023">
    <property type="entry name" value="SmpB"/>
    <property type="match status" value="1"/>
</dbReference>
<dbReference type="InterPro" id="IPR023620">
    <property type="entry name" value="SmpB"/>
</dbReference>
<dbReference type="InterPro" id="IPR000037">
    <property type="entry name" value="SsrA-bd_prot"/>
</dbReference>
<dbReference type="InterPro" id="IPR020081">
    <property type="entry name" value="SsrA-bd_prot_CS"/>
</dbReference>
<dbReference type="NCBIfam" id="NF003843">
    <property type="entry name" value="PRK05422.1"/>
    <property type="match status" value="1"/>
</dbReference>
<dbReference type="NCBIfam" id="TIGR00086">
    <property type="entry name" value="smpB"/>
    <property type="match status" value="1"/>
</dbReference>
<dbReference type="PANTHER" id="PTHR30308:SF2">
    <property type="entry name" value="SSRA-BINDING PROTEIN"/>
    <property type="match status" value="1"/>
</dbReference>
<dbReference type="PANTHER" id="PTHR30308">
    <property type="entry name" value="TMRNA-BINDING COMPONENT OF TRANS-TRANSLATION TAGGING COMPLEX"/>
    <property type="match status" value="1"/>
</dbReference>
<dbReference type="Pfam" id="PF01668">
    <property type="entry name" value="SmpB"/>
    <property type="match status" value="1"/>
</dbReference>
<dbReference type="SUPFAM" id="SSF74982">
    <property type="entry name" value="Small protein B (SmpB)"/>
    <property type="match status" value="1"/>
</dbReference>
<dbReference type="PROSITE" id="PS01317">
    <property type="entry name" value="SSRP"/>
    <property type="match status" value="1"/>
</dbReference>
<protein>
    <recommendedName>
        <fullName evidence="1">SsrA-binding protein</fullName>
    </recommendedName>
    <alternativeName>
        <fullName evidence="1">Small protein B</fullName>
    </alternativeName>
</protein>
<feature type="chain" id="PRO_0000103011" description="SsrA-binding protein">
    <location>
        <begin position="1"/>
        <end position="148"/>
    </location>
</feature>
<feature type="region of interest" description="Disordered" evidence="2">
    <location>
        <begin position="129"/>
        <end position="148"/>
    </location>
</feature>
<evidence type="ECO:0000255" key="1">
    <source>
        <dbReference type="HAMAP-Rule" id="MF_00023"/>
    </source>
</evidence>
<evidence type="ECO:0000256" key="2">
    <source>
        <dbReference type="SAM" id="MobiDB-lite"/>
    </source>
</evidence>
<accession>Q8XZH1</accession>
<keyword id="KW-0963">Cytoplasm</keyword>
<keyword id="KW-1185">Reference proteome</keyword>
<keyword id="KW-0694">RNA-binding</keyword>
<proteinExistence type="inferred from homology"/>
<comment type="function">
    <text evidence="1">Required for rescue of stalled ribosomes mediated by trans-translation. Binds to transfer-messenger RNA (tmRNA), required for stable association of tmRNA with ribosomes. tmRNA and SmpB together mimic tRNA shape, replacing the anticodon stem-loop with SmpB. tmRNA is encoded by the ssrA gene; the 2 termini fold to resemble tRNA(Ala) and it encodes a 'tag peptide', a short internal open reading frame. During trans-translation Ala-aminoacylated tmRNA acts like a tRNA, entering the A-site of stalled ribosomes, displacing the stalled mRNA. The ribosome then switches to translate the ORF on the tmRNA; the nascent peptide is terminated with the 'tag peptide' encoded by the tmRNA and targeted for degradation. The ribosome is freed to recommence translation, which seems to be the essential function of trans-translation.</text>
</comment>
<comment type="subcellular location">
    <subcellularLocation>
        <location evidence="1">Cytoplasm</location>
    </subcellularLocation>
    <text evidence="1">The tmRNA-SmpB complex associates with stalled 70S ribosomes.</text>
</comment>
<comment type="similarity">
    <text evidence="1">Belongs to the SmpB family.</text>
</comment>
<reference key="1">
    <citation type="journal article" date="2002" name="Nature">
        <title>Genome sequence of the plant pathogen Ralstonia solanacearum.</title>
        <authorList>
            <person name="Salanoubat M."/>
            <person name="Genin S."/>
            <person name="Artiguenave F."/>
            <person name="Gouzy J."/>
            <person name="Mangenot S."/>
            <person name="Arlat M."/>
            <person name="Billault A."/>
            <person name="Brottier P."/>
            <person name="Camus J.-C."/>
            <person name="Cattolico L."/>
            <person name="Chandler M."/>
            <person name="Choisne N."/>
            <person name="Claudel-Renard C."/>
            <person name="Cunnac S."/>
            <person name="Demange N."/>
            <person name="Gaspin C."/>
            <person name="Lavie M."/>
            <person name="Moisan A."/>
            <person name="Robert C."/>
            <person name="Saurin W."/>
            <person name="Schiex T."/>
            <person name="Siguier P."/>
            <person name="Thebault P."/>
            <person name="Whalen M."/>
            <person name="Wincker P."/>
            <person name="Levy M."/>
            <person name="Weissenbach J."/>
            <person name="Boucher C.A."/>
        </authorList>
    </citation>
    <scope>NUCLEOTIDE SEQUENCE [LARGE SCALE GENOMIC DNA]</scope>
    <source>
        <strain>ATCC BAA-1114 / GMI1000</strain>
    </source>
</reference>
<sequence length="148" mass="17151">MTIADNKKAFFDYFVEERYEAGIALEGWEVKAIRAGRVQIKEGYVVIRDAELFLIGAHISPLQSASTHVKPDPTRTRKLLLHAEEIKKLIGKVEQRGYTLVPLNLHYARGRVKCEIGLAKGKKLYDKRETEKDRDWQREKARLMREKA</sequence>
<organism>
    <name type="scientific">Ralstonia nicotianae (strain ATCC BAA-1114 / GMI1000)</name>
    <name type="common">Ralstonia solanacearum</name>
    <dbReference type="NCBI Taxonomy" id="267608"/>
    <lineage>
        <taxon>Bacteria</taxon>
        <taxon>Pseudomonadati</taxon>
        <taxon>Pseudomonadota</taxon>
        <taxon>Betaproteobacteria</taxon>
        <taxon>Burkholderiales</taxon>
        <taxon>Burkholderiaceae</taxon>
        <taxon>Ralstonia</taxon>
        <taxon>Ralstonia solanacearum species complex</taxon>
    </lineage>
</organism>
<name>SSRP_RALN1</name>
<gene>
    <name evidence="1" type="primary">smpB</name>
    <name type="ordered locus">RSc1424</name>
    <name type="ORF">RS05268</name>
</gene>